<accession>B2J997</accession>
<evidence type="ECO:0000255" key="1">
    <source>
        <dbReference type="HAMAP-Rule" id="MF_01554"/>
    </source>
</evidence>
<organism>
    <name type="scientific">Nostoc punctiforme (strain ATCC 29133 / PCC 73102)</name>
    <dbReference type="NCBI Taxonomy" id="63737"/>
    <lineage>
        <taxon>Bacteria</taxon>
        <taxon>Bacillati</taxon>
        <taxon>Cyanobacteriota</taxon>
        <taxon>Cyanophyceae</taxon>
        <taxon>Nostocales</taxon>
        <taxon>Nostocaceae</taxon>
        <taxon>Nostoc</taxon>
    </lineage>
</organism>
<keyword id="KW-0413">Isomerase</keyword>
<keyword id="KW-0460">Magnesium</keyword>
<keyword id="KW-0479">Metal-binding</keyword>
<keyword id="KW-0597">Phosphoprotein</keyword>
<keyword id="KW-1185">Reference proteome</keyword>
<dbReference type="EC" id="5.4.2.10" evidence="1"/>
<dbReference type="EMBL" id="CP001037">
    <property type="protein sequence ID" value="ACC79396.1"/>
    <property type="molecule type" value="Genomic_DNA"/>
</dbReference>
<dbReference type="RefSeq" id="WP_012407421.1">
    <property type="nucleotide sequence ID" value="NC_010628.1"/>
</dbReference>
<dbReference type="SMR" id="B2J997"/>
<dbReference type="STRING" id="63737.Npun_R0642"/>
<dbReference type="EnsemblBacteria" id="ACC79396">
    <property type="protein sequence ID" value="ACC79396"/>
    <property type="gene ID" value="Npun_R0642"/>
</dbReference>
<dbReference type="KEGG" id="npu:Npun_R0642"/>
<dbReference type="eggNOG" id="COG1109">
    <property type="taxonomic scope" value="Bacteria"/>
</dbReference>
<dbReference type="HOGENOM" id="CLU_016950_7_0_3"/>
<dbReference type="OrthoDB" id="9806956at2"/>
<dbReference type="PhylomeDB" id="B2J997"/>
<dbReference type="Proteomes" id="UP000001191">
    <property type="component" value="Chromosome"/>
</dbReference>
<dbReference type="GO" id="GO:0005829">
    <property type="term" value="C:cytosol"/>
    <property type="evidence" value="ECO:0007669"/>
    <property type="project" value="TreeGrafter"/>
</dbReference>
<dbReference type="GO" id="GO:0000287">
    <property type="term" value="F:magnesium ion binding"/>
    <property type="evidence" value="ECO:0007669"/>
    <property type="project" value="UniProtKB-UniRule"/>
</dbReference>
<dbReference type="GO" id="GO:0008966">
    <property type="term" value="F:phosphoglucosamine mutase activity"/>
    <property type="evidence" value="ECO:0007669"/>
    <property type="project" value="UniProtKB-UniRule"/>
</dbReference>
<dbReference type="GO" id="GO:0004615">
    <property type="term" value="F:phosphomannomutase activity"/>
    <property type="evidence" value="ECO:0007669"/>
    <property type="project" value="TreeGrafter"/>
</dbReference>
<dbReference type="GO" id="GO:0005975">
    <property type="term" value="P:carbohydrate metabolic process"/>
    <property type="evidence" value="ECO:0007669"/>
    <property type="project" value="InterPro"/>
</dbReference>
<dbReference type="GO" id="GO:0009252">
    <property type="term" value="P:peptidoglycan biosynthetic process"/>
    <property type="evidence" value="ECO:0007669"/>
    <property type="project" value="TreeGrafter"/>
</dbReference>
<dbReference type="GO" id="GO:0006048">
    <property type="term" value="P:UDP-N-acetylglucosamine biosynthetic process"/>
    <property type="evidence" value="ECO:0007669"/>
    <property type="project" value="TreeGrafter"/>
</dbReference>
<dbReference type="CDD" id="cd05802">
    <property type="entry name" value="GlmM"/>
    <property type="match status" value="1"/>
</dbReference>
<dbReference type="FunFam" id="3.30.310.50:FF:000001">
    <property type="entry name" value="Phosphoglucosamine mutase"/>
    <property type="match status" value="1"/>
</dbReference>
<dbReference type="FunFam" id="3.40.120.10:FF:000001">
    <property type="entry name" value="Phosphoglucosamine mutase"/>
    <property type="match status" value="1"/>
</dbReference>
<dbReference type="FunFam" id="3.40.120.10:FF:000002">
    <property type="entry name" value="Phosphoglucosamine mutase"/>
    <property type="match status" value="1"/>
</dbReference>
<dbReference type="Gene3D" id="3.40.120.10">
    <property type="entry name" value="Alpha-D-Glucose-1,6-Bisphosphate, subunit A, domain 3"/>
    <property type="match status" value="3"/>
</dbReference>
<dbReference type="Gene3D" id="3.30.310.50">
    <property type="entry name" value="Alpha-D-phosphohexomutase, C-terminal domain"/>
    <property type="match status" value="1"/>
</dbReference>
<dbReference type="HAMAP" id="MF_01554_B">
    <property type="entry name" value="GlmM_B"/>
    <property type="match status" value="1"/>
</dbReference>
<dbReference type="InterPro" id="IPR005844">
    <property type="entry name" value="A-D-PHexomutase_a/b/a-I"/>
</dbReference>
<dbReference type="InterPro" id="IPR016055">
    <property type="entry name" value="A-D-PHexomutase_a/b/a-I/II/III"/>
</dbReference>
<dbReference type="InterPro" id="IPR005845">
    <property type="entry name" value="A-D-PHexomutase_a/b/a-II"/>
</dbReference>
<dbReference type="InterPro" id="IPR005846">
    <property type="entry name" value="A-D-PHexomutase_a/b/a-III"/>
</dbReference>
<dbReference type="InterPro" id="IPR005843">
    <property type="entry name" value="A-D-PHexomutase_C"/>
</dbReference>
<dbReference type="InterPro" id="IPR036900">
    <property type="entry name" value="A-D-PHexomutase_C_sf"/>
</dbReference>
<dbReference type="InterPro" id="IPR016066">
    <property type="entry name" value="A-D-PHexomutase_CS"/>
</dbReference>
<dbReference type="InterPro" id="IPR005841">
    <property type="entry name" value="Alpha-D-phosphohexomutase_SF"/>
</dbReference>
<dbReference type="InterPro" id="IPR006352">
    <property type="entry name" value="GlmM_bact"/>
</dbReference>
<dbReference type="InterPro" id="IPR050060">
    <property type="entry name" value="Phosphoglucosamine_mutase"/>
</dbReference>
<dbReference type="NCBIfam" id="TIGR01455">
    <property type="entry name" value="glmM"/>
    <property type="match status" value="1"/>
</dbReference>
<dbReference type="PANTHER" id="PTHR42946:SF1">
    <property type="entry name" value="PHOSPHOGLUCOMUTASE (ALPHA-D-GLUCOSE-1,6-BISPHOSPHATE-DEPENDENT)"/>
    <property type="match status" value="1"/>
</dbReference>
<dbReference type="PANTHER" id="PTHR42946">
    <property type="entry name" value="PHOSPHOHEXOSE MUTASE"/>
    <property type="match status" value="1"/>
</dbReference>
<dbReference type="Pfam" id="PF02878">
    <property type="entry name" value="PGM_PMM_I"/>
    <property type="match status" value="1"/>
</dbReference>
<dbReference type="Pfam" id="PF02879">
    <property type="entry name" value="PGM_PMM_II"/>
    <property type="match status" value="1"/>
</dbReference>
<dbReference type="Pfam" id="PF02880">
    <property type="entry name" value="PGM_PMM_III"/>
    <property type="match status" value="1"/>
</dbReference>
<dbReference type="Pfam" id="PF00408">
    <property type="entry name" value="PGM_PMM_IV"/>
    <property type="match status" value="1"/>
</dbReference>
<dbReference type="PRINTS" id="PR00509">
    <property type="entry name" value="PGMPMM"/>
</dbReference>
<dbReference type="SUPFAM" id="SSF55957">
    <property type="entry name" value="Phosphoglucomutase, C-terminal domain"/>
    <property type="match status" value="1"/>
</dbReference>
<dbReference type="SUPFAM" id="SSF53738">
    <property type="entry name" value="Phosphoglucomutase, first 3 domains"/>
    <property type="match status" value="3"/>
</dbReference>
<dbReference type="PROSITE" id="PS00710">
    <property type="entry name" value="PGM_PMM"/>
    <property type="match status" value="1"/>
</dbReference>
<reference key="1">
    <citation type="journal article" date="2013" name="Plant Physiol.">
        <title>A Nostoc punctiforme Sugar Transporter Necessary to Establish a Cyanobacterium-Plant Symbiosis.</title>
        <authorList>
            <person name="Ekman M."/>
            <person name="Picossi S."/>
            <person name="Campbell E.L."/>
            <person name="Meeks J.C."/>
            <person name="Flores E."/>
        </authorList>
    </citation>
    <scope>NUCLEOTIDE SEQUENCE [LARGE SCALE GENOMIC DNA]</scope>
    <source>
        <strain>ATCC 29133 / PCC 73102</strain>
    </source>
</reference>
<proteinExistence type="inferred from homology"/>
<gene>
    <name evidence="1" type="primary">glmM</name>
    <name type="ordered locus">Npun_R0642</name>
</gene>
<protein>
    <recommendedName>
        <fullName evidence="1">Phosphoglucosamine mutase</fullName>
        <ecNumber evidence="1">5.4.2.10</ecNumber>
    </recommendedName>
</protein>
<sequence length="490" mass="52315">MVSSITRIPGIPGDSPSEAEGLGKGIESSFGLNLIPLPANPLFGTDGIRGRVGELLSAPLALQVGFWTGIVLRNHATQIGPVILGQDSRNSSDMLAMALSAGLTAAGLEVWYLGLCPTPCIAYLTSISDAIGGVMISASHNPPEDNGIKVFGANGGKLPQILQAEIEAGLRGKISPIAKVSNCGRHYSRFELVGHYGDALKKPLNSTLNLQGMKIVLDLAWGAAVGLAPSVFTEMGAEVICLHNEADGDRINVNCGSTHLDILAATVQEHNADIGFAFDGDADRVLAVDNTGRQVNGDYILYLWGRHLQKNQQLPDNLIVSTVMANLGFEKAWQQIGGKLIRTAVGDQYVQAEMQRTGGMLGGEQSGHILCRHYAVTGDGLLTALHMAALVKEAGVSLAELVDQSFQTYPQILRNVRVTDRDRRLGWQDCEPVQQAIALAEAAMGDSGRILVRASGTEPVIRVMVEAANAELTNYWTNELVSKVQQHLMD</sequence>
<feature type="chain" id="PRO_1000201122" description="Phosphoglucosamine mutase">
    <location>
        <begin position="1"/>
        <end position="490"/>
    </location>
</feature>
<feature type="active site" description="Phosphoserine intermediate" evidence="1">
    <location>
        <position position="139"/>
    </location>
</feature>
<feature type="binding site" description="via phosphate group" evidence="1">
    <location>
        <position position="139"/>
    </location>
    <ligand>
        <name>Mg(2+)</name>
        <dbReference type="ChEBI" id="CHEBI:18420"/>
    </ligand>
</feature>
<feature type="binding site" evidence="1">
    <location>
        <position position="279"/>
    </location>
    <ligand>
        <name>Mg(2+)</name>
        <dbReference type="ChEBI" id="CHEBI:18420"/>
    </ligand>
</feature>
<feature type="binding site" evidence="1">
    <location>
        <position position="281"/>
    </location>
    <ligand>
        <name>Mg(2+)</name>
        <dbReference type="ChEBI" id="CHEBI:18420"/>
    </ligand>
</feature>
<feature type="binding site" evidence="1">
    <location>
        <position position="283"/>
    </location>
    <ligand>
        <name>Mg(2+)</name>
        <dbReference type="ChEBI" id="CHEBI:18420"/>
    </ligand>
</feature>
<feature type="modified residue" description="Phosphoserine" evidence="1">
    <location>
        <position position="139"/>
    </location>
</feature>
<comment type="function">
    <text evidence="1">Catalyzes the conversion of glucosamine-6-phosphate to glucosamine-1-phosphate.</text>
</comment>
<comment type="catalytic activity">
    <reaction evidence="1">
        <text>alpha-D-glucosamine 1-phosphate = D-glucosamine 6-phosphate</text>
        <dbReference type="Rhea" id="RHEA:23424"/>
        <dbReference type="ChEBI" id="CHEBI:58516"/>
        <dbReference type="ChEBI" id="CHEBI:58725"/>
        <dbReference type="EC" id="5.4.2.10"/>
    </reaction>
</comment>
<comment type="cofactor">
    <cofactor evidence="1">
        <name>Mg(2+)</name>
        <dbReference type="ChEBI" id="CHEBI:18420"/>
    </cofactor>
    <text evidence="1">Binds 1 Mg(2+) ion per subunit.</text>
</comment>
<comment type="PTM">
    <text evidence="1">Activated by phosphorylation.</text>
</comment>
<comment type="similarity">
    <text evidence="1">Belongs to the phosphohexose mutase family.</text>
</comment>
<name>GLMM_NOSP7</name>